<protein>
    <recommendedName>
        <fullName evidence="1">Ribonuclease HII</fullName>
        <shortName evidence="1">RNase HII</shortName>
        <ecNumber evidence="1">3.1.26.4</ecNumber>
    </recommendedName>
</protein>
<name>RNH2_ECOL5</name>
<reference key="1">
    <citation type="journal article" date="2006" name="Mol. Microbiol.">
        <title>Role of pathogenicity island-associated integrases in the genome plasticity of uropathogenic Escherichia coli strain 536.</title>
        <authorList>
            <person name="Hochhut B."/>
            <person name="Wilde C."/>
            <person name="Balling G."/>
            <person name="Middendorf B."/>
            <person name="Dobrindt U."/>
            <person name="Brzuszkiewicz E."/>
            <person name="Gottschalk G."/>
            <person name="Carniel E."/>
            <person name="Hacker J."/>
        </authorList>
    </citation>
    <scope>NUCLEOTIDE SEQUENCE [LARGE SCALE GENOMIC DNA]</scope>
    <source>
        <strain>536 / UPEC</strain>
    </source>
</reference>
<accession>Q0TLF0</accession>
<sequence>MIEFVYPHTQLVAGVDEVGRGPLVGAVVTAAVILDPARPIAGLNDSKKLSEKRRLALCEEIKEKALSWSLGRAEPHEIDELNILHATMLAMQRAVAGLHIAPEYVLIDGNRCPKLPMPSMAVVKGDSRVPEISAASILAKVTRDAEMAALDIVFPQYGFAQHKGYPTAFHLEKLAEHGATEHHRRSFGPVKRALGLAS</sequence>
<keyword id="KW-0963">Cytoplasm</keyword>
<keyword id="KW-0255">Endonuclease</keyword>
<keyword id="KW-0378">Hydrolase</keyword>
<keyword id="KW-0464">Manganese</keyword>
<keyword id="KW-0479">Metal-binding</keyword>
<keyword id="KW-0540">Nuclease</keyword>
<evidence type="ECO:0000255" key="1">
    <source>
        <dbReference type="HAMAP-Rule" id="MF_00052"/>
    </source>
</evidence>
<evidence type="ECO:0000255" key="2">
    <source>
        <dbReference type="PROSITE-ProRule" id="PRU01319"/>
    </source>
</evidence>
<comment type="function">
    <text evidence="1">Endonuclease that specifically degrades the RNA of RNA-DNA hybrids.</text>
</comment>
<comment type="catalytic activity">
    <reaction evidence="1">
        <text>Endonucleolytic cleavage to 5'-phosphomonoester.</text>
        <dbReference type="EC" id="3.1.26.4"/>
    </reaction>
</comment>
<comment type="cofactor">
    <cofactor evidence="1">
        <name>Mn(2+)</name>
        <dbReference type="ChEBI" id="CHEBI:29035"/>
    </cofactor>
    <cofactor evidence="1">
        <name>Mg(2+)</name>
        <dbReference type="ChEBI" id="CHEBI:18420"/>
    </cofactor>
    <text evidence="1">Manganese or magnesium. Binds 1 divalent metal ion per monomer in the absence of substrate. May bind a second metal ion after substrate binding.</text>
</comment>
<comment type="subcellular location">
    <subcellularLocation>
        <location evidence="1">Cytoplasm</location>
    </subcellularLocation>
</comment>
<comment type="similarity">
    <text evidence="1">Belongs to the RNase HII family.</text>
</comment>
<dbReference type="EC" id="3.1.26.4" evidence="1"/>
<dbReference type="EMBL" id="CP000247">
    <property type="protein sequence ID" value="ABG68231.1"/>
    <property type="molecule type" value="Genomic_DNA"/>
</dbReference>
<dbReference type="RefSeq" id="WP_000569423.1">
    <property type="nucleotide sequence ID" value="NC_008253.1"/>
</dbReference>
<dbReference type="SMR" id="Q0TLF0"/>
<dbReference type="KEGG" id="ecp:ECP_0191"/>
<dbReference type="HOGENOM" id="CLU_036532_3_2_6"/>
<dbReference type="Proteomes" id="UP000009182">
    <property type="component" value="Chromosome"/>
</dbReference>
<dbReference type="GO" id="GO:0005737">
    <property type="term" value="C:cytoplasm"/>
    <property type="evidence" value="ECO:0007669"/>
    <property type="project" value="UniProtKB-SubCell"/>
</dbReference>
<dbReference type="GO" id="GO:0032299">
    <property type="term" value="C:ribonuclease H2 complex"/>
    <property type="evidence" value="ECO:0007669"/>
    <property type="project" value="TreeGrafter"/>
</dbReference>
<dbReference type="GO" id="GO:0030145">
    <property type="term" value="F:manganese ion binding"/>
    <property type="evidence" value="ECO:0007669"/>
    <property type="project" value="UniProtKB-UniRule"/>
</dbReference>
<dbReference type="GO" id="GO:0003723">
    <property type="term" value="F:RNA binding"/>
    <property type="evidence" value="ECO:0007669"/>
    <property type="project" value="InterPro"/>
</dbReference>
<dbReference type="GO" id="GO:0004523">
    <property type="term" value="F:RNA-DNA hybrid ribonuclease activity"/>
    <property type="evidence" value="ECO:0007669"/>
    <property type="project" value="UniProtKB-UniRule"/>
</dbReference>
<dbReference type="GO" id="GO:0043137">
    <property type="term" value="P:DNA replication, removal of RNA primer"/>
    <property type="evidence" value="ECO:0007669"/>
    <property type="project" value="TreeGrafter"/>
</dbReference>
<dbReference type="GO" id="GO:0006298">
    <property type="term" value="P:mismatch repair"/>
    <property type="evidence" value="ECO:0007669"/>
    <property type="project" value="TreeGrafter"/>
</dbReference>
<dbReference type="CDD" id="cd07182">
    <property type="entry name" value="RNase_HII_bacteria_HII_like"/>
    <property type="match status" value="1"/>
</dbReference>
<dbReference type="FunFam" id="3.30.420.10:FF:000006">
    <property type="entry name" value="Ribonuclease HII"/>
    <property type="match status" value="1"/>
</dbReference>
<dbReference type="Gene3D" id="3.30.420.10">
    <property type="entry name" value="Ribonuclease H-like superfamily/Ribonuclease H"/>
    <property type="match status" value="1"/>
</dbReference>
<dbReference type="HAMAP" id="MF_00052_B">
    <property type="entry name" value="RNase_HII_B"/>
    <property type="match status" value="1"/>
</dbReference>
<dbReference type="InterPro" id="IPR022898">
    <property type="entry name" value="RNase_HII"/>
</dbReference>
<dbReference type="InterPro" id="IPR001352">
    <property type="entry name" value="RNase_HII/HIII"/>
</dbReference>
<dbReference type="InterPro" id="IPR024567">
    <property type="entry name" value="RNase_HII/HIII_dom"/>
</dbReference>
<dbReference type="InterPro" id="IPR012337">
    <property type="entry name" value="RNaseH-like_sf"/>
</dbReference>
<dbReference type="InterPro" id="IPR036397">
    <property type="entry name" value="RNaseH_sf"/>
</dbReference>
<dbReference type="NCBIfam" id="NF000594">
    <property type="entry name" value="PRK00015.1-1"/>
    <property type="match status" value="1"/>
</dbReference>
<dbReference type="NCBIfam" id="NF000595">
    <property type="entry name" value="PRK00015.1-3"/>
    <property type="match status" value="1"/>
</dbReference>
<dbReference type="NCBIfam" id="NF000596">
    <property type="entry name" value="PRK00015.1-4"/>
    <property type="match status" value="1"/>
</dbReference>
<dbReference type="PANTHER" id="PTHR10954">
    <property type="entry name" value="RIBONUCLEASE H2 SUBUNIT A"/>
    <property type="match status" value="1"/>
</dbReference>
<dbReference type="PANTHER" id="PTHR10954:SF18">
    <property type="entry name" value="RIBONUCLEASE HII"/>
    <property type="match status" value="1"/>
</dbReference>
<dbReference type="Pfam" id="PF01351">
    <property type="entry name" value="RNase_HII"/>
    <property type="match status" value="1"/>
</dbReference>
<dbReference type="SUPFAM" id="SSF53098">
    <property type="entry name" value="Ribonuclease H-like"/>
    <property type="match status" value="1"/>
</dbReference>
<dbReference type="PROSITE" id="PS51975">
    <property type="entry name" value="RNASE_H_2"/>
    <property type="match status" value="1"/>
</dbReference>
<proteinExistence type="inferred from homology"/>
<feature type="chain" id="PRO_1000031137" description="Ribonuclease HII">
    <location>
        <begin position="1"/>
        <end position="198"/>
    </location>
</feature>
<feature type="domain" description="RNase H type-2" evidence="2">
    <location>
        <begin position="10"/>
        <end position="198"/>
    </location>
</feature>
<feature type="binding site" evidence="1">
    <location>
        <position position="16"/>
    </location>
    <ligand>
        <name>a divalent metal cation</name>
        <dbReference type="ChEBI" id="CHEBI:60240"/>
    </ligand>
</feature>
<feature type="binding site" evidence="1">
    <location>
        <position position="17"/>
    </location>
    <ligand>
        <name>a divalent metal cation</name>
        <dbReference type="ChEBI" id="CHEBI:60240"/>
    </ligand>
</feature>
<feature type="binding site" evidence="1">
    <location>
        <position position="108"/>
    </location>
    <ligand>
        <name>a divalent metal cation</name>
        <dbReference type="ChEBI" id="CHEBI:60240"/>
    </ligand>
</feature>
<organism>
    <name type="scientific">Escherichia coli O6:K15:H31 (strain 536 / UPEC)</name>
    <dbReference type="NCBI Taxonomy" id="362663"/>
    <lineage>
        <taxon>Bacteria</taxon>
        <taxon>Pseudomonadati</taxon>
        <taxon>Pseudomonadota</taxon>
        <taxon>Gammaproteobacteria</taxon>
        <taxon>Enterobacterales</taxon>
        <taxon>Enterobacteriaceae</taxon>
        <taxon>Escherichia</taxon>
    </lineage>
</organism>
<gene>
    <name evidence="1" type="primary">rnhB</name>
    <name type="ordered locus">ECP_0191</name>
</gene>